<evidence type="ECO:0000250" key="1"/>
<evidence type="ECO:0000256" key="2">
    <source>
        <dbReference type="SAM" id="MobiDB-lite"/>
    </source>
</evidence>
<evidence type="ECO:0000305" key="3"/>
<name>GLS3_CAEEL</name>
<comment type="catalytic activity">
    <reaction>
        <text>L-glutamine + H2O = L-glutamate + NH4(+)</text>
        <dbReference type="Rhea" id="RHEA:15889"/>
        <dbReference type="ChEBI" id="CHEBI:15377"/>
        <dbReference type="ChEBI" id="CHEBI:28938"/>
        <dbReference type="ChEBI" id="CHEBI:29985"/>
        <dbReference type="ChEBI" id="CHEBI:58359"/>
        <dbReference type="EC" id="3.5.1.2"/>
    </reaction>
</comment>
<comment type="similarity">
    <text evidence="3">Belongs to the glutaminase family.</text>
</comment>
<feature type="chain" id="PRO_0000110585" description="Putative glutaminase 3">
    <location>
        <begin position="1"/>
        <end position="583"/>
    </location>
</feature>
<feature type="repeat" description="ANK 1">
    <location>
        <begin position="482"/>
        <end position="514"/>
    </location>
</feature>
<feature type="repeat" description="ANK 2">
    <location>
        <begin position="515"/>
        <end position="548"/>
    </location>
</feature>
<feature type="repeat" description="ANK 3">
    <location>
        <begin position="549"/>
        <end position="581"/>
    </location>
</feature>
<feature type="region of interest" description="Disordered" evidence="2">
    <location>
        <begin position="1"/>
        <end position="29"/>
    </location>
</feature>
<feature type="binding site" evidence="1">
    <location>
        <position position="216"/>
    </location>
    <ligand>
        <name>substrate</name>
    </ligand>
</feature>
<feature type="binding site" evidence="1">
    <location>
        <position position="265"/>
    </location>
    <ligand>
        <name>substrate</name>
    </ligand>
</feature>
<feature type="binding site" evidence="1">
    <location>
        <position position="311"/>
    </location>
    <ligand>
        <name>substrate</name>
    </ligand>
</feature>
<feature type="binding site" evidence="1">
    <location>
        <position position="318"/>
    </location>
    <ligand>
        <name>substrate</name>
    </ligand>
</feature>
<feature type="binding site" evidence="1">
    <location>
        <position position="344"/>
    </location>
    <ligand>
        <name>substrate</name>
    </ligand>
</feature>
<feature type="binding site" evidence="1">
    <location>
        <position position="396"/>
    </location>
    <ligand>
        <name>substrate</name>
    </ligand>
</feature>
<feature type="binding site" evidence="1">
    <location>
        <position position="414"/>
    </location>
    <ligand>
        <name>substrate</name>
    </ligand>
</feature>
<dbReference type="EC" id="3.5.1.2"/>
<dbReference type="EMBL" id="Z81073">
    <property type="protein sequence ID" value="CAB03030.2"/>
    <property type="molecule type" value="Genomic_DNA"/>
</dbReference>
<dbReference type="EMBL" id="Z79752">
    <property type="protein sequence ID" value="CAB03030.2"/>
    <property type="status" value="JOINED"/>
    <property type="molecule type" value="Genomic_DNA"/>
</dbReference>
<dbReference type="PIR" id="T21575">
    <property type="entry name" value="T21575"/>
</dbReference>
<dbReference type="RefSeq" id="NP_492162.1">
    <property type="nucleotide sequence ID" value="NM_059761.4"/>
</dbReference>
<dbReference type="SMR" id="Q93650"/>
<dbReference type="FunCoup" id="Q93650">
    <property type="interactions" value="35"/>
</dbReference>
<dbReference type="STRING" id="6239.F30F8.2.1"/>
<dbReference type="PaxDb" id="6239-F30F8.2"/>
<dbReference type="PeptideAtlas" id="Q93650"/>
<dbReference type="EnsemblMetazoa" id="F30F8.2.1">
    <property type="protein sequence ID" value="F30F8.2.1"/>
    <property type="gene ID" value="WBGene00009271"/>
</dbReference>
<dbReference type="GeneID" id="172547"/>
<dbReference type="KEGG" id="cel:CELE_F30F8.2"/>
<dbReference type="UCSC" id="F30F8.2">
    <property type="organism name" value="c. elegans"/>
</dbReference>
<dbReference type="AGR" id="WB:WBGene00009271"/>
<dbReference type="CTD" id="172547"/>
<dbReference type="WormBase" id="F30F8.2">
    <property type="protein sequence ID" value="CE28553"/>
    <property type="gene ID" value="WBGene00009271"/>
    <property type="gene designation" value="glna-3"/>
</dbReference>
<dbReference type="eggNOG" id="KOG0506">
    <property type="taxonomic scope" value="Eukaryota"/>
</dbReference>
<dbReference type="GeneTree" id="ENSGT00390000010463"/>
<dbReference type="HOGENOM" id="CLU_016439_1_0_1"/>
<dbReference type="InParanoid" id="Q93650"/>
<dbReference type="OMA" id="WGTQHIY"/>
<dbReference type="OrthoDB" id="9995210at2759"/>
<dbReference type="PhylomeDB" id="Q93650"/>
<dbReference type="Reactome" id="R-CEL-210500">
    <property type="pathway name" value="Glutamate Neurotransmitter Release Cycle"/>
</dbReference>
<dbReference type="Reactome" id="R-CEL-5628897">
    <property type="pathway name" value="TP53 Regulates Metabolic Genes"/>
</dbReference>
<dbReference type="Reactome" id="R-CEL-8964539">
    <property type="pathway name" value="Glutamate and glutamine metabolism"/>
</dbReference>
<dbReference type="PRO" id="PR:Q93650"/>
<dbReference type="Proteomes" id="UP000001940">
    <property type="component" value="Chromosome I"/>
</dbReference>
<dbReference type="Bgee" id="WBGene00009271">
    <property type="expression patterns" value="Expressed in adult organism and 4 other cell types or tissues"/>
</dbReference>
<dbReference type="GO" id="GO:0004359">
    <property type="term" value="F:glutaminase activity"/>
    <property type="evidence" value="ECO:0000318"/>
    <property type="project" value="GO_Central"/>
</dbReference>
<dbReference type="GO" id="GO:0006537">
    <property type="term" value="P:glutamate biosynthetic process"/>
    <property type="evidence" value="ECO:0000318"/>
    <property type="project" value="GO_Central"/>
</dbReference>
<dbReference type="GO" id="GO:0006543">
    <property type="term" value="P:glutamine catabolic process"/>
    <property type="evidence" value="ECO:0000318"/>
    <property type="project" value="GO_Central"/>
</dbReference>
<dbReference type="FunFam" id="1.10.238.210:FF:000004">
    <property type="entry name" value="CRE-GLNA-3 protein"/>
    <property type="match status" value="1"/>
</dbReference>
<dbReference type="FunFam" id="1.25.40.20:FF:000393">
    <property type="entry name" value="CRE-GLNA-3 protein"/>
    <property type="match status" value="1"/>
</dbReference>
<dbReference type="FunFam" id="3.40.710.10:FF:000008">
    <property type="entry name" value="Glutaminase, isoform E"/>
    <property type="match status" value="1"/>
</dbReference>
<dbReference type="Gene3D" id="1.10.238.210">
    <property type="match status" value="1"/>
</dbReference>
<dbReference type="Gene3D" id="1.25.40.20">
    <property type="entry name" value="Ankyrin repeat-containing domain"/>
    <property type="match status" value="1"/>
</dbReference>
<dbReference type="Gene3D" id="3.40.710.10">
    <property type="entry name" value="DD-peptidase/beta-lactamase superfamily"/>
    <property type="match status" value="1"/>
</dbReference>
<dbReference type="HAMAP" id="MF_00313">
    <property type="entry name" value="Glutaminase"/>
    <property type="match status" value="1"/>
</dbReference>
<dbReference type="InterPro" id="IPR002110">
    <property type="entry name" value="Ankyrin_rpt"/>
</dbReference>
<dbReference type="InterPro" id="IPR036770">
    <property type="entry name" value="Ankyrin_rpt-contain_sf"/>
</dbReference>
<dbReference type="InterPro" id="IPR012338">
    <property type="entry name" value="Beta-lactam/transpept-like"/>
</dbReference>
<dbReference type="InterPro" id="IPR015868">
    <property type="entry name" value="Glutaminase"/>
</dbReference>
<dbReference type="InterPro" id="IPR041541">
    <property type="entry name" value="Glutaminase_EF-hand"/>
</dbReference>
<dbReference type="NCBIfam" id="TIGR03814">
    <property type="entry name" value="Gln_ase"/>
    <property type="match status" value="1"/>
</dbReference>
<dbReference type="PANTHER" id="PTHR12544">
    <property type="entry name" value="GLUTAMINASE"/>
    <property type="match status" value="1"/>
</dbReference>
<dbReference type="PANTHER" id="PTHR12544:SF51">
    <property type="entry name" value="GLUTAMINASE 3-RELATED"/>
    <property type="match status" value="1"/>
</dbReference>
<dbReference type="Pfam" id="PF12796">
    <property type="entry name" value="Ank_2"/>
    <property type="match status" value="1"/>
</dbReference>
<dbReference type="Pfam" id="PF17959">
    <property type="entry name" value="EF-hand_14"/>
    <property type="match status" value="1"/>
</dbReference>
<dbReference type="Pfam" id="PF04960">
    <property type="entry name" value="Glutaminase"/>
    <property type="match status" value="1"/>
</dbReference>
<dbReference type="SMART" id="SM00248">
    <property type="entry name" value="ANK"/>
    <property type="match status" value="3"/>
</dbReference>
<dbReference type="SUPFAM" id="SSF48403">
    <property type="entry name" value="Ankyrin repeat"/>
    <property type="match status" value="1"/>
</dbReference>
<dbReference type="SUPFAM" id="SSF56601">
    <property type="entry name" value="beta-lactamase/transpeptidase-like"/>
    <property type="match status" value="1"/>
</dbReference>
<dbReference type="PROSITE" id="PS50297">
    <property type="entry name" value="ANK_REP_REGION"/>
    <property type="match status" value="1"/>
</dbReference>
<protein>
    <recommendedName>
        <fullName>Putative glutaminase 3</fullName>
        <shortName>GLS</shortName>
        <ecNumber>3.5.1.2</ecNumber>
    </recommendedName>
    <alternativeName>
        <fullName>L-glutamine amidohydrolase</fullName>
    </alternativeName>
</protein>
<organism>
    <name type="scientific">Caenorhabditis elegans</name>
    <dbReference type="NCBI Taxonomy" id="6239"/>
    <lineage>
        <taxon>Eukaryota</taxon>
        <taxon>Metazoa</taxon>
        <taxon>Ecdysozoa</taxon>
        <taxon>Nematoda</taxon>
        <taxon>Chromadorea</taxon>
        <taxon>Rhabditida</taxon>
        <taxon>Rhabditina</taxon>
        <taxon>Rhabditomorpha</taxon>
        <taxon>Rhabditoidea</taxon>
        <taxon>Rhabditidae</taxon>
        <taxon>Peloderinae</taxon>
        <taxon>Caenorhabditis</taxon>
    </lineage>
</organism>
<sequence length="583" mass="66361">MDNKEKEDEELSDELKDQPGPSEKPRTPTVVAFTKPSFYRVNTVISDVKVCRSMSYDMCGNHQQELLFDLYKDETTGKVYLPRFFKALLESGIRKDDPRIDKMIQNIKDADLLDDFVWGTQHIYLEKDTFKRYIGSSIGVVTKALKKQMIIPDWERFVSDMGEIFEDVRSHNEGDLATYIPQLSRVAPDSWAMSVCTIDGQRKMWGDALKPFCLQSVSKPFTYALVHDDIGPEELHAHVGQEPSGRLFNDISLDHNKKPHNPLINAGAIVVASLLKNKLPLADRFDFMIHACRKFVGSGYIGFDNSVFLSERETADRNYALSYYMREHKVFPKDLNLQDTLDLYFQICSIETNCDSLAVMAATLANGGVNPMNGERIVNNRACRDTLSLMYSCGMYDWSGQFAFHVGLPAKSGVSGDMIIVIPNVMGIALYSPRLDKLGNTVRGVKFAEQLVQKYNFHNYDSLIYSDNKKIDPRRQLKDDHDGQNRFMYATKLGDIAAIKRFLLMGHDIHCKDYDDRTVLHVAAAEGDVVTLEYVLSKWQEDPNPCDRYDRTPLDDAKHFNHTACVKLLEEAITVYNLKGQDD</sequence>
<gene>
    <name type="primary">glna-3</name>
    <name type="ORF">F30F8.2</name>
</gene>
<reference key="1">
    <citation type="journal article" date="1998" name="Science">
        <title>Genome sequence of the nematode C. elegans: a platform for investigating biology.</title>
        <authorList>
            <consortium name="The C. elegans sequencing consortium"/>
        </authorList>
    </citation>
    <scope>NUCLEOTIDE SEQUENCE [LARGE SCALE GENOMIC DNA]</scope>
    <source>
        <strain>Bristol N2</strain>
    </source>
</reference>
<accession>Q93650</accession>
<accession>Q95QP4</accession>
<keyword id="KW-0040">ANK repeat</keyword>
<keyword id="KW-0378">Hydrolase</keyword>
<keyword id="KW-1185">Reference proteome</keyword>
<keyword id="KW-0677">Repeat</keyword>
<proteinExistence type="inferred from homology"/>